<accession>Q7WAB3</accession>
<dbReference type="EMBL" id="BX640427">
    <property type="protein sequence ID" value="CAE36769.1"/>
    <property type="molecule type" value="Genomic_DNA"/>
</dbReference>
<dbReference type="RefSeq" id="WP_003811931.1">
    <property type="nucleotide sequence ID" value="NC_002928.3"/>
</dbReference>
<dbReference type="SMR" id="Q7WAB3"/>
<dbReference type="GeneID" id="93203226"/>
<dbReference type="KEGG" id="bpa:BPP1467"/>
<dbReference type="HOGENOM" id="CLU_144160_1_0_4"/>
<dbReference type="Proteomes" id="UP000001421">
    <property type="component" value="Chromosome"/>
</dbReference>
<dbReference type="GO" id="GO:0005737">
    <property type="term" value="C:cytoplasm"/>
    <property type="evidence" value="ECO:0007669"/>
    <property type="project" value="UniProtKB-SubCell"/>
</dbReference>
<dbReference type="GO" id="GO:0003677">
    <property type="term" value="F:DNA binding"/>
    <property type="evidence" value="ECO:0007669"/>
    <property type="project" value="UniProtKB-UniRule"/>
</dbReference>
<dbReference type="GO" id="GO:0044780">
    <property type="term" value="P:bacterial-type flagellum assembly"/>
    <property type="evidence" value="ECO:0007669"/>
    <property type="project" value="InterPro"/>
</dbReference>
<dbReference type="GO" id="GO:0045893">
    <property type="term" value="P:positive regulation of DNA-templated transcription"/>
    <property type="evidence" value="ECO:0007669"/>
    <property type="project" value="InterPro"/>
</dbReference>
<dbReference type="GO" id="GO:1902208">
    <property type="term" value="P:regulation of bacterial-type flagellum assembly"/>
    <property type="evidence" value="ECO:0007669"/>
    <property type="project" value="UniProtKB-UniRule"/>
</dbReference>
<dbReference type="Gene3D" id="1.10.4000.10">
    <property type="entry name" value="Flagellar transcriptional activator FlhD"/>
    <property type="match status" value="1"/>
</dbReference>
<dbReference type="HAMAP" id="MF_00725">
    <property type="entry name" value="FlhD"/>
    <property type="match status" value="1"/>
</dbReference>
<dbReference type="InterPro" id="IPR023559">
    <property type="entry name" value="Flagellar_FlhD"/>
</dbReference>
<dbReference type="InterPro" id="IPR036194">
    <property type="entry name" value="FlhD_sf"/>
</dbReference>
<dbReference type="NCBIfam" id="NF002783">
    <property type="entry name" value="PRK02909.1-1"/>
    <property type="match status" value="1"/>
</dbReference>
<dbReference type="Pfam" id="PF05247">
    <property type="entry name" value="FlhD"/>
    <property type="match status" value="1"/>
</dbReference>
<dbReference type="SUPFAM" id="SSF63592">
    <property type="entry name" value="Flagellar transcriptional activator FlhD"/>
    <property type="match status" value="1"/>
</dbReference>
<feature type="chain" id="PRO_0000182711" description="Flagellar transcriptional regulator FlhD">
    <location>
        <begin position="1"/>
        <end position="107"/>
    </location>
</feature>
<feature type="disulfide bond" description="Interchain" evidence="1">
    <location>
        <position position="67"/>
    </location>
</feature>
<reference key="1">
    <citation type="journal article" date="2003" name="Nat. Genet.">
        <title>Comparative analysis of the genome sequences of Bordetella pertussis, Bordetella parapertussis and Bordetella bronchiseptica.</title>
        <authorList>
            <person name="Parkhill J."/>
            <person name="Sebaihia M."/>
            <person name="Preston A."/>
            <person name="Murphy L.D."/>
            <person name="Thomson N.R."/>
            <person name="Harris D.E."/>
            <person name="Holden M.T.G."/>
            <person name="Churcher C.M."/>
            <person name="Bentley S.D."/>
            <person name="Mungall K.L."/>
            <person name="Cerdeno-Tarraga A.-M."/>
            <person name="Temple L."/>
            <person name="James K.D."/>
            <person name="Harris B."/>
            <person name="Quail M.A."/>
            <person name="Achtman M."/>
            <person name="Atkin R."/>
            <person name="Baker S."/>
            <person name="Basham D."/>
            <person name="Bason N."/>
            <person name="Cherevach I."/>
            <person name="Chillingworth T."/>
            <person name="Collins M."/>
            <person name="Cronin A."/>
            <person name="Davis P."/>
            <person name="Doggett J."/>
            <person name="Feltwell T."/>
            <person name="Goble A."/>
            <person name="Hamlin N."/>
            <person name="Hauser H."/>
            <person name="Holroyd S."/>
            <person name="Jagels K."/>
            <person name="Leather S."/>
            <person name="Moule S."/>
            <person name="Norberczak H."/>
            <person name="O'Neil S."/>
            <person name="Ormond D."/>
            <person name="Price C."/>
            <person name="Rabbinowitsch E."/>
            <person name="Rutter S."/>
            <person name="Sanders M."/>
            <person name="Saunders D."/>
            <person name="Seeger K."/>
            <person name="Sharp S."/>
            <person name="Simmonds M."/>
            <person name="Skelton J."/>
            <person name="Squares R."/>
            <person name="Squares S."/>
            <person name="Stevens K."/>
            <person name="Unwin L."/>
            <person name="Whitehead S."/>
            <person name="Barrell B.G."/>
            <person name="Maskell D.J."/>
        </authorList>
    </citation>
    <scope>NUCLEOTIDE SEQUENCE [LARGE SCALE GENOMIC DNA]</scope>
    <source>
        <strain>12822 / ATCC BAA-587 / NCTC 13253</strain>
    </source>
</reference>
<sequence length="107" mass="11835">MKTADSSLLADIREVNLSYLLLAQRMLRDDYAASMFRLGFSNEVADILMRLSPAQLVKLASSSSLLCRFRFDDYSLLSALTQDVLGGALQQAHATILLARQPVEELA</sequence>
<name>FLHD_BORPA</name>
<organism>
    <name type="scientific">Bordetella parapertussis (strain 12822 / ATCC BAA-587 / NCTC 13253)</name>
    <dbReference type="NCBI Taxonomy" id="257311"/>
    <lineage>
        <taxon>Bacteria</taxon>
        <taxon>Pseudomonadati</taxon>
        <taxon>Pseudomonadota</taxon>
        <taxon>Betaproteobacteria</taxon>
        <taxon>Burkholderiales</taxon>
        <taxon>Alcaligenaceae</taxon>
        <taxon>Bordetella</taxon>
    </lineage>
</organism>
<gene>
    <name evidence="1" type="primary">flhD</name>
    <name type="synonym">frlA</name>
    <name type="ordered locus">BPP1467</name>
</gene>
<protein>
    <recommendedName>
        <fullName evidence="1">Flagellar transcriptional regulator FlhD</fullName>
    </recommendedName>
</protein>
<evidence type="ECO:0000255" key="1">
    <source>
        <dbReference type="HAMAP-Rule" id="MF_00725"/>
    </source>
</evidence>
<keyword id="KW-0010">Activator</keyword>
<keyword id="KW-1005">Bacterial flagellum biogenesis</keyword>
<keyword id="KW-0963">Cytoplasm</keyword>
<keyword id="KW-1015">Disulfide bond</keyword>
<keyword id="KW-0238">DNA-binding</keyword>
<keyword id="KW-0804">Transcription</keyword>
<keyword id="KW-0805">Transcription regulation</keyword>
<proteinExistence type="inferred from homology"/>
<comment type="function">
    <text evidence="1">Functions in complex with FlhC as a master transcriptional regulator that regulates transcription of several flagellar and non-flagellar operons by binding to their promoter region. Activates expression of class 2 flagellar genes, including fliA, which is a flagellum-specific sigma factor that turns on the class 3 genes. Also regulates genes whose products function in a variety of physiological pathways.</text>
</comment>
<comment type="subunit">
    <text evidence="1">Homodimer; disulfide-linked. Forms a heterohexamer composed of two FlhC and four FlhD subunits. Each FlhC binds a FlhD dimer, forming a heterotrimer, and a hexamer assembles by dimerization of two heterotrimers.</text>
</comment>
<comment type="subcellular location">
    <subcellularLocation>
        <location evidence="1">Cytoplasm</location>
    </subcellularLocation>
</comment>
<comment type="domain">
    <text evidence="1">The C-terminal region contains a putative helix-turn-helix (HTH) motif, suggesting that this region may bind DNA.</text>
</comment>
<comment type="similarity">
    <text evidence="1">Belongs to the FlhD family.</text>
</comment>